<keyword id="KW-0963">Cytoplasm</keyword>
<keyword id="KW-0251">Elongation factor</keyword>
<keyword id="KW-0648">Protein biosynthesis</keyword>
<keyword id="KW-1185">Reference proteome</keyword>
<reference key="1">
    <citation type="journal article" date="2005" name="Nat. Biotechnol.">
        <title>Complete genome sequence of the acetic acid bacterium Gluconobacter oxydans.</title>
        <authorList>
            <person name="Prust C."/>
            <person name="Hoffmeister M."/>
            <person name="Liesegang H."/>
            <person name="Wiezer A."/>
            <person name="Fricke W.F."/>
            <person name="Ehrenreich A."/>
            <person name="Gottschalk G."/>
            <person name="Deppenmeier U."/>
        </authorList>
    </citation>
    <scope>NUCLEOTIDE SEQUENCE [LARGE SCALE GENOMIC DNA]</scope>
    <source>
        <strain>621H</strain>
    </source>
</reference>
<comment type="function">
    <text evidence="1">Associates with the EF-Tu.GDP complex and induces the exchange of GDP to GTP. It remains bound to the aminoacyl-tRNA.EF-Tu.GTP complex up to the GTP hydrolysis stage on the ribosome.</text>
</comment>
<comment type="subcellular location">
    <subcellularLocation>
        <location evidence="1">Cytoplasm</location>
    </subcellularLocation>
</comment>
<comment type="similarity">
    <text evidence="1">Belongs to the EF-Ts family.</text>
</comment>
<proteinExistence type="inferred from homology"/>
<sequence length="302" mass="31973">MAEITAALVRELREATGAGMMDCKKALTEAAGDMEAAIDWLRTKGLSQAAKKSGRTTAEGLVGVASAKNRAAMVEVNAETDFVGRNEAFQAFVEQVAHVALEVGDDLDAIKAGKVPSGRTVADELTHLIATIGENMAIRRAKVLSVESGVVASYVHSALRPGIGKIGVLAALEAPSESDALLTLGRQIGMHVAATRPAALDVASVDPEALERERAVLIEQARESGKPEAIIEKMVEGRIRKFYEEVVLLEQVWVLDGESRVAKVVEKAGAKLVGFERFQLGEGIEKEESDFAAEVAAAAGTK</sequence>
<organism>
    <name type="scientific">Gluconobacter oxydans (strain 621H)</name>
    <name type="common">Gluconobacter suboxydans</name>
    <dbReference type="NCBI Taxonomy" id="290633"/>
    <lineage>
        <taxon>Bacteria</taxon>
        <taxon>Pseudomonadati</taxon>
        <taxon>Pseudomonadota</taxon>
        <taxon>Alphaproteobacteria</taxon>
        <taxon>Acetobacterales</taxon>
        <taxon>Acetobacteraceae</taxon>
        <taxon>Gluconobacter</taxon>
    </lineage>
</organism>
<dbReference type="EMBL" id="CP000009">
    <property type="protein sequence ID" value="AAW59871.1"/>
    <property type="molecule type" value="Genomic_DNA"/>
</dbReference>
<dbReference type="RefSeq" id="WP_011251675.1">
    <property type="nucleotide sequence ID" value="NZ_LT900338.1"/>
</dbReference>
<dbReference type="SMR" id="Q5FUV8"/>
<dbReference type="STRING" id="290633.GOX0074"/>
<dbReference type="KEGG" id="gox:GOX0074"/>
<dbReference type="eggNOG" id="COG0264">
    <property type="taxonomic scope" value="Bacteria"/>
</dbReference>
<dbReference type="HOGENOM" id="CLU_047155_2_0_5"/>
<dbReference type="Proteomes" id="UP000006375">
    <property type="component" value="Chromosome"/>
</dbReference>
<dbReference type="GO" id="GO:0005737">
    <property type="term" value="C:cytoplasm"/>
    <property type="evidence" value="ECO:0007669"/>
    <property type="project" value="UniProtKB-SubCell"/>
</dbReference>
<dbReference type="GO" id="GO:0003746">
    <property type="term" value="F:translation elongation factor activity"/>
    <property type="evidence" value="ECO:0007669"/>
    <property type="project" value="UniProtKB-UniRule"/>
</dbReference>
<dbReference type="CDD" id="cd14275">
    <property type="entry name" value="UBA_EF-Ts"/>
    <property type="match status" value="1"/>
</dbReference>
<dbReference type="FunFam" id="1.10.286.20:FF:000001">
    <property type="entry name" value="Elongation factor Ts"/>
    <property type="match status" value="1"/>
</dbReference>
<dbReference type="FunFam" id="1.10.8.10:FF:000001">
    <property type="entry name" value="Elongation factor Ts"/>
    <property type="match status" value="1"/>
</dbReference>
<dbReference type="Gene3D" id="1.10.286.20">
    <property type="match status" value="1"/>
</dbReference>
<dbReference type="Gene3D" id="1.10.8.10">
    <property type="entry name" value="DNA helicase RuvA subunit, C-terminal domain"/>
    <property type="match status" value="1"/>
</dbReference>
<dbReference type="Gene3D" id="3.30.479.20">
    <property type="entry name" value="Elongation factor Ts, dimerisation domain"/>
    <property type="match status" value="2"/>
</dbReference>
<dbReference type="HAMAP" id="MF_00050">
    <property type="entry name" value="EF_Ts"/>
    <property type="match status" value="1"/>
</dbReference>
<dbReference type="InterPro" id="IPR036402">
    <property type="entry name" value="EF-Ts_dimer_sf"/>
</dbReference>
<dbReference type="InterPro" id="IPR001816">
    <property type="entry name" value="Transl_elong_EFTs/EF1B"/>
</dbReference>
<dbReference type="InterPro" id="IPR014039">
    <property type="entry name" value="Transl_elong_EFTs/EF1B_dimer"/>
</dbReference>
<dbReference type="InterPro" id="IPR018101">
    <property type="entry name" value="Transl_elong_Ts_CS"/>
</dbReference>
<dbReference type="InterPro" id="IPR009060">
    <property type="entry name" value="UBA-like_sf"/>
</dbReference>
<dbReference type="NCBIfam" id="TIGR00116">
    <property type="entry name" value="tsf"/>
    <property type="match status" value="1"/>
</dbReference>
<dbReference type="PANTHER" id="PTHR11741">
    <property type="entry name" value="ELONGATION FACTOR TS"/>
    <property type="match status" value="1"/>
</dbReference>
<dbReference type="PANTHER" id="PTHR11741:SF0">
    <property type="entry name" value="ELONGATION FACTOR TS, MITOCHONDRIAL"/>
    <property type="match status" value="1"/>
</dbReference>
<dbReference type="Pfam" id="PF00889">
    <property type="entry name" value="EF_TS"/>
    <property type="match status" value="1"/>
</dbReference>
<dbReference type="SUPFAM" id="SSF54713">
    <property type="entry name" value="Elongation factor Ts (EF-Ts), dimerisation domain"/>
    <property type="match status" value="2"/>
</dbReference>
<dbReference type="SUPFAM" id="SSF46934">
    <property type="entry name" value="UBA-like"/>
    <property type="match status" value="1"/>
</dbReference>
<dbReference type="PROSITE" id="PS01126">
    <property type="entry name" value="EF_TS_1"/>
    <property type="match status" value="1"/>
</dbReference>
<protein>
    <recommendedName>
        <fullName evidence="1">Elongation factor Ts</fullName>
        <shortName evidence="1">EF-Ts</shortName>
    </recommendedName>
</protein>
<accession>Q5FUV8</accession>
<feature type="chain" id="PRO_0000241486" description="Elongation factor Ts">
    <location>
        <begin position="1"/>
        <end position="302"/>
    </location>
</feature>
<feature type="region of interest" description="Involved in Mg(2+) ion dislocation from EF-Tu" evidence="1">
    <location>
        <begin position="80"/>
        <end position="83"/>
    </location>
</feature>
<gene>
    <name evidence="1" type="primary">tsf</name>
    <name type="ordered locus">GOX0074</name>
</gene>
<evidence type="ECO:0000255" key="1">
    <source>
        <dbReference type="HAMAP-Rule" id="MF_00050"/>
    </source>
</evidence>
<name>EFTS_GLUOX</name>